<dbReference type="EMBL" id="DS499596">
    <property type="protein sequence ID" value="EDP53267.1"/>
    <property type="molecule type" value="Genomic_DNA"/>
</dbReference>
<dbReference type="EnsemblFungi" id="EDP53267">
    <property type="protein sequence ID" value="EDP53267"/>
    <property type="gene ID" value="AFUB_044390"/>
</dbReference>
<dbReference type="VEuPathDB" id="FungiDB:AFUB_044390"/>
<dbReference type="HOGENOM" id="CLU_053540_0_0_1"/>
<dbReference type="OrthoDB" id="48083at5052"/>
<dbReference type="PhylomeDB" id="B0XZH1"/>
<dbReference type="Proteomes" id="UP000001699">
    <property type="component" value="Unassembled WGS sequence"/>
</dbReference>
<dbReference type="GO" id="GO:0005634">
    <property type="term" value="C:nucleus"/>
    <property type="evidence" value="ECO:0007669"/>
    <property type="project" value="UniProtKB-SubCell"/>
</dbReference>
<accession>B0XZH1</accession>
<evidence type="ECO:0000250" key="1">
    <source>
        <dbReference type="UniProtKB" id="B0Y8Y7"/>
    </source>
</evidence>
<evidence type="ECO:0000250" key="2">
    <source>
        <dbReference type="UniProtKB" id="Q4WW97"/>
    </source>
</evidence>
<evidence type="ECO:0000256" key="3">
    <source>
        <dbReference type="SAM" id="MobiDB-lite"/>
    </source>
</evidence>
<evidence type="ECO:0000303" key="4">
    <source>
    </source>
</evidence>
<evidence type="ECO:0000305" key="5"/>
<reference key="1">
    <citation type="journal article" date="2008" name="PLoS Genet.">
        <title>Genomic islands in the pathogenic filamentous fungus Aspergillus fumigatus.</title>
        <authorList>
            <person name="Fedorova N.D."/>
            <person name="Khaldi N."/>
            <person name="Joardar V.S."/>
            <person name="Maiti R."/>
            <person name="Amedeo P."/>
            <person name="Anderson M.J."/>
            <person name="Crabtree J."/>
            <person name="Silva J.C."/>
            <person name="Badger J.H."/>
            <person name="Albarraq A."/>
            <person name="Angiuoli S."/>
            <person name="Bussey H."/>
            <person name="Bowyer P."/>
            <person name="Cotty P.J."/>
            <person name="Dyer P.S."/>
            <person name="Egan A."/>
            <person name="Galens K."/>
            <person name="Fraser-Liggett C.M."/>
            <person name="Haas B.J."/>
            <person name="Inman J.M."/>
            <person name="Kent R."/>
            <person name="Lemieux S."/>
            <person name="Malavazi I."/>
            <person name="Orvis J."/>
            <person name="Roemer T."/>
            <person name="Ronning C.M."/>
            <person name="Sundaram J.P."/>
            <person name="Sutton G."/>
            <person name="Turner G."/>
            <person name="Venter J.C."/>
            <person name="White O.R."/>
            <person name="Whitty B.R."/>
            <person name="Youngman P."/>
            <person name="Wolfe K.H."/>
            <person name="Goldman G.H."/>
            <person name="Wortman J.R."/>
            <person name="Jiang B."/>
            <person name="Denning D.W."/>
            <person name="Nierman W.C."/>
        </authorList>
    </citation>
    <scope>NUCLEOTIDE SEQUENCE [LARGE SCALE GENOMIC DNA]</scope>
    <source>
        <strain>CBS 144.89 / FGSC A1163 / CEA10</strain>
    </source>
</reference>
<reference key="2">
    <citation type="journal article" date="2019" name="Nat. Microbiol.">
        <title>Fungal biofilm morphology impacts hypoxia fitness and disease progression.</title>
        <authorList>
            <person name="Kowalski C.H."/>
            <person name="Kerkaert J.D."/>
            <person name="Liu K.W."/>
            <person name="Bond M.C."/>
            <person name="Hartmann R."/>
            <person name="Nadell C.D."/>
            <person name="Stajich J.E."/>
            <person name="Cramer R.A."/>
        </authorList>
    </citation>
    <scope>IDENTIFICATION</scope>
    <scope>FUNCTION</scope>
</reference>
<keyword id="KW-0539">Nucleus</keyword>
<sequence length="423" mass="48621">MARSNYLRIFRVLEEINRRRTIPDIYHEALEDRLVITFTQPSGPLKRSKTRRPKKEYKLQYENTKAHRVYVEILEDYPQLFIPFILATPPKSCETFKLGEFREKHDLSAVKVDLRPDIRRTLDNIANRKGFNQNRRYRRLICTLFPSGRKPATTAETQNCWAYRAAYLNAVHTIFSEQICSAMEVSPTAHSPECQAPQTTSCVEMKLPKQNYQDAIVLLELSLPIDTIKILFPSANERIICSLSPQSGRGPEPSTQIAEPGRHDSQSEQSTISQSEGYILRGASISAILSVFGPRIWGAIEKSQLRKWEKDNLSEETTDCVSIEIHPRRPHCSTCRVRIGFIDDSHFRRKTVHLSLSLSAPNPLALLILEFNIFAVETVEPSFVVFRKYIIHWMFVAVIEEARRNSKGFPKGALQCCEYIHKD</sequence>
<proteinExistence type="inferred from homology"/>
<feature type="chain" id="PRO_0000460413" description="Hypoxia responsive morphology factor B">
    <location>
        <begin position="1"/>
        <end position="423"/>
    </location>
</feature>
<feature type="region of interest" description="RNA recognition motif (RRM)-like domain" evidence="2">
    <location>
        <begin position="157"/>
        <end position="187"/>
    </location>
</feature>
<feature type="region of interest" description="Disordered" evidence="3">
    <location>
        <begin position="243"/>
        <end position="273"/>
    </location>
</feature>
<feature type="short sequence motif" description="Bipartite nuclear localization signal" evidence="2">
    <location>
        <begin position="46"/>
        <end position="69"/>
    </location>
</feature>
<feature type="compositionally biased region" description="Polar residues" evidence="3">
    <location>
        <begin position="243"/>
        <end position="257"/>
    </location>
</feature>
<organism>
    <name type="scientific">Aspergillus fumigatus (strain CBS 144.89 / FGSC A1163 / CEA10)</name>
    <name type="common">Neosartorya fumigata</name>
    <dbReference type="NCBI Taxonomy" id="451804"/>
    <lineage>
        <taxon>Eukaryota</taxon>
        <taxon>Fungi</taxon>
        <taxon>Dikarya</taxon>
        <taxon>Ascomycota</taxon>
        <taxon>Pezizomycotina</taxon>
        <taxon>Eurotiomycetes</taxon>
        <taxon>Eurotiomycetidae</taxon>
        <taxon>Eurotiales</taxon>
        <taxon>Aspergillaceae</taxon>
        <taxon>Aspergillus</taxon>
        <taxon>Aspergillus subgen. Fumigati</taxon>
    </lineage>
</organism>
<name>HRMB_ASPFC</name>
<protein>
    <recommendedName>
        <fullName evidence="4">Hypoxia responsive morphology factor B</fullName>
    </recommendedName>
</protein>
<comment type="function">
    <text evidence="1">Probably modulates the generation of the hypoxia-typic morphotype (called H-MORPH) with altered biofilm architecture that leads to increased host inflammation, rapid disease progression, and mortality in a murine model of invasive aspergillosis.</text>
</comment>
<comment type="subcellular location">
    <subcellularLocation>
        <location evidence="1">Nucleus</location>
    </subcellularLocation>
</comment>
<comment type="domain">
    <text evidence="1">The N-terminal bipartite nuclear localization signalis required for nuclear localization and generation of the H-MORPH morphotype.</text>
</comment>
<comment type="similarity">
    <text evidence="5">Belongs to the hrmA family.</text>
</comment>
<gene>
    <name evidence="4" type="primary">hrmB</name>
    <name type="ORF">AFUB_044390</name>
</gene>